<name>RPOC_SHESH</name>
<gene>
    <name evidence="1" type="primary">rpoC</name>
    <name type="ordered locus">Ssed_4323</name>
</gene>
<proteinExistence type="inferred from homology"/>
<organism>
    <name type="scientific">Shewanella sediminis (strain HAW-EB3)</name>
    <dbReference type="NCBI Taxonomy" id="425104"/>
    <lineage>
        <taxon>Bacteria</taxon>
        <taxon>Pseudomonadati</taxon>
        <taxon>Pseudomonadota</taxon>
        <taxon>Gammaproteobacteria</taxon>
        <taxon>Alteromonadales</taxon>
        <taxon>Shewanellaceae</taxon>
        <taxon>Shewanella</taxon>
    </lineage>
</organism>
<accession>A8G1F4</accession>
<feature type="chain" id="PRO_0000353432" description="DNA-directed RNA polymerase subunit beta'">
    <location>
        <begin position="1"/>
        <end position="1405"/>
    </location>
</feature>
<feature type="binding site" evidence="1">
    <location>
        <position position="70"/>
    </location>
    <ligand>
        <name>Zn(2+)</name>
        <dbReference type="ChEBI" id="CHEBI:29105"/>
        <label>1</label>
    </ligand>
</feature>
<feature type="binding site" evidence="1">
    <location>
        <position position="72"/>
    </location>
    <ligand>
        <name>Zn(2+)</name>
        <dbReference type="ChEBI" id="CHEBI:29105"/>
        <label>1</label>
    </ligand>
</feature>
<feature type="binding site" evidence="1">
    <location>
        <position position="85"/>
    </location>
    <ligand>
        <name>Zn(2+)</name>
        <dbReference type="ChEBI" id="CHEBI:29105"/>
        <label>1</label>
    </ligand>
</feature>
<feature type="binding site" evidence="1">
    <location>
        <position position="88"/>
    </location>
    <ligand>
        <name>Zn(2+)</name>
        <dbReference type="ChEBI" id="CHEBI:29105"/>
        <label>1</label>
    </ligand>
</feature>
<feature type="binding site" evidence="1">
    <location>
        <position position="460"/>
    </location>
    <ligand>
        <name>Mg(2+)</name>
        <dbReference type="ChEBI" id="CHEBI:18420"/>
    </ligand>
</feature>
<feature type="binding site" evidence="1">
    <location>
        <position position="462"/>
    </location>
    <ligand>
        <name>Mg(2+)</name>
        <dbReference type="ChEBI" id="CHEBI:18420"/>
    </ligand>
</feature>
<feature type="binding site" evidence="1">
    <location>
        <position position="464"/>
    </location>
    <ligand>
        <name>Mg(2+)</name>
        <dbReference type="ChEBI" id="CHEBI:18420"/>
    </ligand>
</feature>
<feature type="binding site" evidence="1">
    <location>
        <position position="814"/>
    </location>
    <ligand>
        <name>Zn(2+)</name>
        <dbReference type="ChEBI" id="CHEBI:29105"/>
        <label>2</label>
    </ligand>
</feature>
<feature type="binding site" evidence="1">
    <location>
        <position position="888"/>
    </location>
    <ligand>
        <name>Zn(2+)</name>
        <dbReference type="ChEBI" id="CHEBI:29105"/>
        <label>2</label>
    </ligand>
</feature>
<feature type="binding site" evidence="1">
    <location>
        <position position="895"/>
    </location>
    <ligand>
        <name>Zn(2+)</name>
        <dbReference type="ChEBI" id="CHEBI:29105"/>
        <label>2</label>
    </ligand>
</feature>
<feature type="binding site" evidence="1">
    <location>
        <position position="898"/>
    </location>
    <ligand>
        <name>Zn(2+)</name>
        <dbReference type="ChEBI" id="CHEBI:29105"/>
        <label>2</label>
    </ligand>
</feature>
<keyword id="KW-0240">DNA-directed RNA polymerase</keyword>
<keyword id="KW-0460">Magnesium</keyword>
<keyword id="KW-0479">Metal-binding</keyword>
<keyword id="KW-0548">Nucleotidyltransferase</keyword>
<keyword id="KW-1185">Reference proteome</keyword>
<keyword id="KW-0804">Transcription</keyword>
<keyword id="KW-0808">Transferase</keyword>
<keyword id="KW-0862">Zinc</keyword>
<comment type="function">
    <text evidence="1">DNA-dependent RNA polymerase catalyzes the transcription of DNA into RNA using the four ribonucleoside triphosphates as substrates.</text>
</comment>
<comment type="catalytic activity">
    <reaction evidence="1">
        <text>RNA(n) + a ribonucleoside 5'-triphosphate = RNA(n+1) + diphosphate</text>
        <dbReference type="Rhea" id="RHEA:21248"/>
        <dbReference type="Rhea" id="RHEA-COMP:14527"/>
        <dbReference type="Rhea" id="RHEA-COMP:17342"/>
        <dbReference type="ChEBI" id="CHEBI:33019"/>
        <dbReference type="ChEBI" id="CHEBI:61557"/>
        <dbReference type="ChEBI" id="CHEBI:140395"/>
        <dbReference type="EC" id="2.7.7.6"/>
    </reaction>
</comment>
<comment type="cofactor">
    <cofactor evidence="1">
        <name>Mg(2+)</name>
        <dbReference type="ChEBI" id="CHEBI:18420"/>
    </cofactor>
    <text evidence="1">Binds 1 Mg(2+) ion per subunit.</text>
</comment>
<comment type="cofactor">
    <cofactor evidence="1">
        <name>Zn(2+)</name>
        <dbReference type="ChEBI" id="CHEBI:29105"/>
    </cofactor>
    <text evidence="1">Binds 2 Zn(2+) ions per subunit.</text>
</comment>
<comment type="subunit">
    <text evidence="1">The RNAP catalytic core consists of 2 alpha, 1 beta, 1 beta' and 1 omega subunit. When a sigma factor is associated with the core the holoenzyme is formed, which can initiate transcription.</text>
</comment>
<comment type="similarity">
    <text evidence="1">Belongs to the RNA polymerase beta' chain family.</text>
</comment>
<protein>
    <recommendedName>
        <fullName evidence="1">DNA-directed RNA polymerase subunit beta'</fullName>
        <shortName evidence="1">RNAP subunit beta'</shortName>
        <ecNumber evidence="1">2.7.7.6</ecNumber>
    </recommendedName>
    <alternativeName>
        <fullName evidence="1">RNA polymerase subunit beta'</fullName>
    </alternativeName>
    <alternativeName>
        <fullName evidence="1">Transcriptase subunit beta'</fullName>
    </alternativeName>
</protein>
<evidence type="ECO:0000255" key="1">
    <source>
        <dbReference type="HAMAP-Rule" id="MF_01322"/>
    </source>
</evidence>
<reference key="1">
    <citation type="submission" date="2007-08" db="EMBL/GenBank/DDBJ databases">
        <title>Complete sequence of Shewanella sediminis HAW-EB3.</title>
        <authorList>
            <consortium name="US DOE Joint Genome Institute"/>
            <person name="Copeland A."/>
            <person name="Lucas S."/>
            <person name="Lapidus A."/>
            <person name="Barry K."/>
            <person name="Glavina del Rio T."/>
            <person name="Dalin E."/>
            <person name="Tice H."/>
            <person name="Pitluck S."/>
            <person name="Chertkov O."/>
            <person name="Brettin T."/>
            <person name="Bruce D."/>
            <person name="Detter J.C."/>
            <person name="Han C."/>
            <person name="Schmutz J."/>
            <person name="Larimer F."/>
            <person name="Land M."/>
            <person name="Hauser L."/>
            <person name="Kyrpides N."/>
            <person name="Kim E."/>
            <person name="Zhao J.-S."/>
            <person name="Richardson P."/>
        </authorList>
    </citation>
    <scope>NUCLEOTIDE SEQUENCE [LARGE SCALE GENOMIC DNA]</scope>
    <source>
        <strain>HAW-EB3</strain>
    </source>
</reference>
<dbReference type="EC" id="2.7.7.6" evidence="1"/>
<dbReference type="EMBL" id="CP000821">
    <property type="protein sequence ID" value="ABV38927.1"/>
    <property type="molecule type" value="Genomic_DNA"/>
</dbReference>
<dbReference type="RefSeq" id="WP_012144654.1">
    <property type="nucleotide sequence ID" value="NC_009831.1"/>
</dbReference>
<dbReference type="SMR" id="A8G1F4"/>
<dbReference type="STRING" id="425104.Ssed_4323"/>
<dbReference type="KEGG" id="sse:Ssed_4323"/>
<dbReference type="eggNOG" id="COG0086">
    <property type="taxonomic scope" value="Bacteria"/>
</dbReference>
<dbReference type="HOGENOM" id="CLU_000524_3_1_6"/>
<dbReference type="OrthoDB" id="9815296at2"/>
<dbReference type="Proteomes" id="UP000002015">
    <property type="component" value="Chromosome"/>
</dbReference>
<dbReference type="GO" id="GO:0000428">
    <property type="term" value="C:DNA-directed RNA polymerase complex"/>
    <property type="evidence" value="ECO:0007669"/>
    <property type="project" value="UniProtKB-KW"/>
</dbReference>
<dbReference type="GO" id="GO:0003677">
    <property type="term" value="F:DNA binding"/>
    <property type="evidence" value="ECO:0007669"/>
    <property type="project" value="UniProtKB-UniRule"/>
</dbReference>
<dbReference type="GO" id="GO:0003899">
    <property type="term" value="F:DNA-directed RNA polymerase activity"/>
    <property type="evidence" value="ECO:0007669"/>
    <property type="project" value="UniProtKB-UniRule"/>
</dbReference>
<dbReference type="GO" id="GO:0000287">
    <property type="term" value="F:magnesium ion binding"/>
    <property type="evidence" value="ECO:0007669"/>
    <property type="project" value="UniProtKB-UniRule"/>
</dbReference>
<dbReference type="GO" id="GO:0008270">
    <property type="term" value="F:zinc ion binding"/>
    <property type="evidence" value="ECO:0007669"/>
    <property type="project" value="UniProtKB-UniRule"/>
</dbReference>
<dbReference type="GO" id="GO:0006351">
    <property type="term" value="P:DNA-templated transcription"/>
    <property type="evidence" value="ECO:0007669"/>
    <property type="project" value="UniProtKB-UniRule"/>
</dbReference>
<dbReference type="CDD" id="cd02655">
    <property type="entry name" value="RNAP_beta'_C"/>
    <property type="match status" value="1"/>
</dbReference>
<dbReference type="CDD" id="cd01609">
    <property type="entry name" value="RNAP_beta'_N"/>
    <property type="match status" value="1"/>
</dbReference>
<dbReference type="FunFam" id="1.10.132.30:FF:000003">
    <property type="entry name" value="DNA-directed RNA polymerase subunit beta"/>
    <property type="match status" value="1"/>
</dbReference>
<dbReference type="FunFam" id="1.10.150.390:FF:000002">
    <property type="entry name" value="DNA-directed RNA polymerase subunit beta"/>
    <property type="match status" value="1"/>
</dbReference>
<dbReference type="FunFam" id="1.10.40.90:FF:000001">
    <property type="entry name" value="DNA-directed RNA polymerase subunit beta"/>
    <property type="match status" value="1"/>
</dbReference>
<dbReference type="FunFam" id="4.10.860.120:FF:000001">
    <property type="entry name" value="DNA-directed RNA polymerase subunit beta"/>
    <property type="match status" value="1"/>
</dbReference>
<dbReference type="Gene3D" id="1.10.132.30">
    <property type="match status" value="1"/>
</dbReference>
<dbReference type="Gene3D" id="1.10.150.390">
    <property type="match status" value="1"/>
</dbReference>
<dbReference type="Gene3D" id="1.10.1790.20">
    <property type="match status" value="1"/>
</dbReference>
<dbReference type="Gene3D" id="1.10.40.90">
    <property type="match status" value="1"/>
</dbReference>
<dbReference type="Gene3D" id="2.40.40.20">
    <property type="match status" value="1"/>
</dbReference>
<dbReference type="Gene3D" id="2.40.50.100">
    <property type="match status" value="3"/>
</dbReference>
<dbReference type="Gene3D" id="4.10.860.120">
    <property type="entry name" value="RNA polymerase II, clamp domain"/>
    <property type="match status" value="1"/>
</dbReference>
<dbReference type="Gene3D" id="1.10.274.100">
    <property type="entry name" value="RNA polymerase Rpb1, domain 3"/>
    <property type="match status" value="1"/>
</dbReference>
<dbReference type="HAMAP" id="MF_01322">
    <property type="entry name" value="RNApol_bact_RpoC"/>
    <property type="match status" value="1"/>
</dbReference>
<dbReference type="InterPro" id="IPR045867">
    <property type="entry name" value="DNA-dir_RpoC_beta_prime"/>
</dbReference>
<dbReference type="InterPro" id="IPR012754">
    <property type="entry name" value="DNA-dir_RpoC_beta_prime_bact"/>
</dbReference>
<dbReference type="InterPro" id="IPR000722">
    <property type="entry name" value="RNA_pol_asu"/>
</dbReference>
<dbReference type="InterPro" id="IPR006592">
    <property type="entry name" value="RNA_pol_N"/>
</dbReference>
<dbReference type="InterPro" id="IPR007080">
    <property type="entry name" value="RNA_pol_Rpb1_1"/>
</dbReference>
<dbReference type="InterPro" id="IPR007066">
    <property type="entry name" value="RNA_pol_Rpb1_3"/>
</dbReference>
<dbReference type="InterPro" id="IPR042102">
    <property type="entry name" value="RNA_pol_Rpb1_3_sf"/>
</dbReference>
<dbReference type="InterPro" id="IPR007083">
    <property type="entry name" value="RNA_pol_Rpb1_4"/>
</dbReference>
<dbReference type="InterPro" id="IPR007081">
    <property type="entry name" value="RNA_pol_Rpb1_5"/>
</dbReference>
<dbReference type="InterPro" id="IPR044893">
    <property type="entry name" value="RNA_pol_Rpb1_clamp_domain"/>
</dbReference>
<dbReference type="InterPro" id="IPR038120">
    <property type="entry name" value="Rpb1_funnel_sf"/>
</dbReference>
<dbReference type="NCBIfam" id="TIGR02386">
    <property type="entry name" value="rpoC_TIGR"/>
    <property type="match status" value="1"/>
</dbReference>
<dbReference type="PANTHER" id="PTHR19376">
    <property type="entry name" value="DNA-DIRECTED RNA POLYMERASE"/>
    <property type="match status" value="1"/>
</dbReference>
<dbReference type="PANTHER" id="PTHR19376:SF54">
    <property type="entry name" value="DNA-DIRECTED RNA POLYMERASE SUBUNIT BETA"/>
    <property type="match status" value="1"/>
</dbReference>
<dbReference type="Pfam" id="PF04997">
    <property type="entry name" value="RNA_pol_Rpb1_1"/>
    <property type="match status" value="1"/>
</dbReference>
<dbReference type="Pfam" id="PF00623">
    <property type="entry name" value="RNA_pol_Rpb1_2"/>
    <property type="match status" value="2"/>
</dbReference>
<dbReference type="Pfam" id="PF04983">
    <property type="entry name" value="RNA_pol_Rpb1_3"/>
    <property type="match status" value="1"/>
</dbReference>
<dbReference type="Pfam" id="PF05000">
    <property type="entry name" value="RNA_pol_Rpb1_4"/>
    <property type="match status" value="1"/>
</dbReference>
<dbReference type="Pfam" id="PF04998">
    <property type="entry name" value="RNA_pol_Rpb1_5"/>
    <property type="match status" value="1"/>
</dbReference>
<dbReference type="SMART" id="SM00663">
    <property type="entry name" value="RPOLA_N"/>
    <property type="match status" value="1"/>
</dbReference>
<dbReference type="SUPFAM" id="SSF64484">
    <property type="entry name" value="beta and beta-prime subunits of DNA dependent RNA-polymerase"/>
    <property type="match status" value="1"/>
</dbReference>
<sequence length="1405" mass="155364">MKDLLKFLKQQSKTEEFNGIKIGLASPDLIRSWSFGEVKKPETINYRTFKPEREGLFCARIFGPVKDYECLCGKYKRLKHRGVICEKCGVEVTQTKVRRERMGHIDLASPVAHIWFLKSLPSRIGLMLDMTLRDIERVLYFESFVVIEPGMTSLERGQMLTEENYLDALEEYGDEFEAKMGAEAVLELLRAIELEKEIEMMREELPSINSETRRKKITKRLKLVEAFFQSGNKPEWMILKVLPVLPPDLRPLVPLDGGRFATSDLNDLYRRVINRNNRLKRLLDLAAPDIIVRNEKRMLQESVDALLDNGRRGRAITGSNKRPLKSLADMIKGKQGRFRQNLLGKRVDYSGRSVITVGPTLRLHQCGLPKKMALELFKPFIYGKLEGRGLATTIKAAKKMVEREVPEVWDVLDDVIREHPVMLNRAPTLHRLGIQAFEPVLIEGKAIQLHPLVCAAYNADFDGDQMAVHVPLTLEAQLEARSLMMSTNNILSPANGEPVITPSQDVVLGLYYTSRECVNGKGEGMVFESVDEVEKAYRTKFAAIHARVKVRITETNIDENGERSESRRIVDTTVGRALLSRILPKGLSYDLVNQNMGKKQISKLLNTCYRQLGLKDTVIFADQLMYAGFHYATVSGASVGINDMVIPDEKYTLVADAEAEVLEIQEQFQSGLVTAGERYNKVIDIWASANEKVSKAMMENLSSETVINREGVPEKQESFNSIYMMADSGARGSAAQIRQLAGMRGLMAKPDGSIIETPIVANFREGLNVSQYFISTHGARKGLADTALKTANSGYLTRRLVDVAQDLVVIEDDCGTFEGLTMKPLIEGGDVVEPLRERVLGRVVAIDVMYPGTEKVLAPRNTLLDEAWCDLLEEHSVDEMIVRSVISCDTDFGVCKACYGRDLARGHIINQGEAIGVVAAQSIGEPGTQLTMRTFHIGGAASRASAENNVQVKNAGTVKLHNAKHVTNSEGKLVIVSRSSEIAIIDELGREKERYKVPYGTILEKLEEASVAAGEIIANWDPHTHPIISEVAGSIKFVDMLDGVTMTRQTDELTGLSSIVVMEVGQRPTAGKEMRPAIRLVGADGNDLMIPGTEVPAQYFLPANAIVNQDDNAPINVGDALARIPQESSKTRDITGGLPRVADLFEARKPKEPAILAEYSGTISFGKETKGKRRLVITPADGSEAYEEMIPKWRNLNVFEGEKVERGEVIADGAEAAHDILRLRGIHKVANYIVNEVQDVYRLQGVKINDKHIEVIIRQMLRKCEITNAGDSQFLAGEQAEVSRVKIANRELEAQGKQPATFERELLGITKASLATESFISAASFQETTRVLTEAAVGGKSDKLRGLKENVIVGRLIPAGTGYSYHQKRNAAAAAGTTTEAAPAISASEAEQNLADLLNLAGSSD</sequence>